<comment type="function">
    <text evidence="1">Broad mercury transporter that mediates the transport of both CH(3)Hg(I) and Hg(II) across the membrane.</text>
</comment>
<comment type="subcellular location">
    <subcellularLocation>
        <location evidence="1">Cell inner membrane</location>
        <topology evidence="2">Multi-pass membrane protein</topology>
    </subcellularLocation>
</comment>
<geneLocation type="plasmid">
    <name>pVS1</name>
</geneLocation>
<name>MERE_PSEAI</name>
<feature type="chain" id="PRO_0000096426" description="Broad mercury transporter MerE">
    <location>
        <begin position="1"/>
        <end position="78"/>
    </location>
</feature>
<feature type="transmembrane region" description="Helical" evidence="2">
    <location>
        <begin position="19"/>
        <end position="39"/>
    </location>
</feature>
<feature type="transmembrane region" description="Helical" evidence="2">
    <location>
        <begin position="45"/>
        <end position="65"/>
    </location>
</feature>
<proteinExistence type="inferred from homology"/>
<sequence>MNNPERLPSETHKPITGYLWGGLAVLTCPCHLPILAVVLAGTTAGAFLGEHWVIAALGLTGLFLLSLSRALRAFRERE</sequence>
<gene>
    <name type="primary">merE</name>
</gene>
<evidence type="ECO:0000250" key="1">
    <source>
        <dbReference type="UniProtKB" id="Q7AKA4"/>
    </source>
</evidence>
<evidence type="ECO:0000255" key="2"/>
<accession>P06690</accession>
<protein>
    <recommendedName>
        <fullName evidence="1">Broad mercury transporter MerE</fullName>
    </recommendedName>
</protein>
<keyword id="KW-0997">Cell inner membrane</keyword>
<keyword id="KW-1003">Cell membrane</keyword>
<keyword id="KW-0472">Membrane</keyword>
<keyword id="KW-0475">Mercuric resistance</keyword>
<keyword id="KW-0614">Plasmid</keyword>
<keyword id="KW-0812">Transmembrane</keyword>
<keyword id="KW-1133">Transmembrane helix</keyword>
<keyword id="KW-0813">Transport</keyword>
<keyword id="KW-0814">Transposable element</keyword>
<organism>
    <name type="scientific">Pseudomonas aeruginosa</name>
    <dbReference type="NCBI Taxonomy" id="287"/>
    <lineage>
        <taxon>Bacteria</taxon>
        <taxon>Pseudomonadati</taxon>
        <taxon>Pseudomonadota</taxon>
        <taxon>Gammaproteobacteria</taxon>
        <taxon>Pseudomonadales</taxon>
        <taxon>Pseudomonadaceae</taxon>
        <taxon>Pseudomonas</taxon>
    </lineage>
</organism>
<dbReference type="EMBL" id="Z00027">
    <property type="protein sequence ID" value="CAA77325.1"/>
    <property type="molecule type" value="Genomic_DNA"/>
</dbReference>
<dbReference type="RefSeq" id="WP_003132004.1">
    <property type="nucleotide sequence ID" value="NZ_WXZW01000069.1"/>
</dbReference>
<dbReference type="RefSeq" id="YP_001427360.1">
    <property type="nucleotide sequence ID" value="NC_009739.1"/>
</dbReference>
<dbReference type="GeneID" id="98407050"/>
<dbReference type="OMA" id="MNGPERL"/>
<dbReference type="PRO" id="PR:P06690"/>
<dbReference type="GO" id="GO:0005886">
    <property type="term" value="C:plasma membrane"/>
    <property type="evidence" value="ECO:0007669"/>
    <property type="project" value="UniProtKB-SubCell"/>
</dbReference>
<dbReference type="GO" id="GO:0015097">
    <property type="term" value="F:mercury ion transmembrane transporter activity"/>
    <property type="evidence" value="ECO:0007669"/>
    <property type="project" value="InterPro"/>
</dbReference>
<dbReference type="InterPro" id="IPR007746">
    <property type="entry name" value="MerE"/>
</dbReference>
<dbReference type="NCBIfam" id="NF010310">
    <property type="entry name" value="PRK13747.1"/>
    <property type="match status" value="1"/>
</dbReference>
<dbReference type="Pfam" id="PF05052">
    <property type="entry name" value="MerE"/>
    <property type="match status" value="1"/>
</dbReference>
<reference key="1">
    <citation type="journal article" date="1986" name="Mol. Gen. Genet.">
        <title>The nucleotide sequence of the mercuric resistance operons of plasmid R100 and transposon Tn501: further evidence for mer genes which enhance the activity of the mercuric ion detoxification system.</title>
        <authorList>
            <person name="Brown N.L."/>
            <person name="Misra T.K."/>
            <person name="Winnie J.N."/>
            <person name="Schmidt A."/>
            <person name="Seiff M."/>
            <person name="Silver S."/>
        </authorList>
    </citation>
    <scope>NUCLEOTIDE SEQUENCE [GENOMIC DNA]</scope>
    <source>
        <transposon>Tn501</transposon>
    </source>
</reference>